<gene>
    <name type="ordered locus">SE_1336</name>
</gene>
<reference key="1">
    <citation type="journal article" date="2003" name="Mol. Microbiol.">
        <title>Genome-based analysis of virulence genes in a non-biofilm-forming Staphylococcus epidermidis strain (ATCC 12228).</title>
        <authorList>
            <person name="Zhang Y.-Q."/>
            <person name="Ren S.-X."/>
            <person name="Li H.-L."/>
            <person name="Wang Y.-X."/>
            <person name="Fu G."/>
            <person name="Yang J."/>
            <person name="Qin Z.-Q."/>
            <person name="Miao Y.-G."/>
            <person name="Wang W.-Y."/>
            <person name="Chen R.-S."/>
            <person name="Shen Y."/>
            <person name="Chen Z."/>
            <person name="Yuan Z.-H."/>
            <person name="Zhao G.-P."/>
            <person name="Qu D."/>
            <person name="Danchin A."/>
            <person name="Wen Y.-M."/>
        </authorList>
    </citation>
    <scope>NUCLEOTIDE SEQUENCE [LARGE SCALE GENOMIC DNA]</scope>
    <source>
        <strain>ATCC 12228 / FDA PCI 1200</strain>
    </source>
</reference>
<keyword id="KW-0378">Hydrolase</keyword>
<keyword id="KW-0479">Metal-binding</keyword>
<keyword id="KW-0482">Metalloprotease</keyword>
<keyword id="KW-0645">Protease</keyword>
<keyword id="KW-0862">Zinc</keyword>
<comment type="similarity">
    <text evidence="2">Belongs to the UPF0758 family.</text>
</comment>
<name>Y1336_STAES</name>
<proteinExistence type="inferred from homology"/>
<organism>
    <name type="scientific">Staphylococcus epidermidis (strain ATCC 12228 / FDA PCI 1200)</name>
    <dbReference type="NCBI Taxonomy" id="176280"/>
    <lineage>
        <taxon>Bacteria</taxon>
        <taxon>Bacillati</taxon>
        <taxon>Bacillota</taxon>
        <taxon>Bacilli</taxon>
        <taxon>Bacillales</taxon>
        <taxon>Staphylococcaceae</taxon>
        <taxon>Staphylococcus</taxon>
    </lineage>
</organism>
<evidence type="ECO:0000255" key="1">
    <source>
        <dbReference type="PROSITE-ProRule" id="PRU01182"/>
    </source>
</evidence>
<evidence type="ECO:0000305" key="2"/>
<feature type="chain" id="PRO_0000190734" description="UPF0758 protein SE_1336">
    <location>
        <begin position="1"/>
        <end position="226"/>
    </location>
</feature>
<feature type="domain" description="MPN" evidence="1">
    <location>
        <begin position="102"/>
        <end position="224"/>
    </location>
</feature>
<feature type="short sequence motif" description="JAMM motif" evidence="1">
    <location>
        <begin position="173"/>
        <end position="186"/>
    </location>
</feature>
<feature type="binding site" evidence="1">
    <location>
        <position position="173"/>
    </location>
    <ligand>
        <name>Zn(2+)</name>
        <dbReference type="ChEBI" id="CHEBI:29105"/>
        <note>catalytic</note>
    </ligand>
</feature>
<feature type="binding site" evidence="1">
    <location>
        <position position="175"/>
    </location>
    <ligand>
        <name>Zn(2+)</name>
        <dbReference type="ChEBI" id="CHEBI:29105"/>
        <note>catalytic</note>
    </ligand>
</feature>
<feature type="binding site" evidence="1">
    <location>
        <position position="186"/>
    </location>
    <ligand>
        <name>Zn(2+)</name>
        <dbReference type="ChEBI" id="CHEBI:29105"/>
        <note>catalytic</note>
    </ligand>
</feature>
<protein>
    <recommendedName>
        <fullName>UPF0758 protein SE_1336</fullName>
    </recommendedName>
</protein>
<accession>Q8CNZ4</accession>
<dbReference type="EMBL" id="AE015929">
    <property type="protein sequence ID" value="AAO04935.1"/>
    <property type="molecule type" value="Genomic_DNA"/>
</dbReference>
<dbReference type="RefSeq" id="NP_764891.1">
    <property type="nucleotide sequence ID" value="NC_004461.1"/>
</dbReference>
<dbReference type="SMR" id="Q8CNZ4"/>
<dbReference type="KEGG" id="sep:SE_1336"/>
<dbReference type="PATRIC" id="fig|176280.10.peg.1305"/>
<dbReference type="eggNOG" id="COG2003">
    <property type="taxonomic scope" value="Bacteria"/>
</dbReference>
<dbReference type="HOGENOM" id="CLU_073529_0_2_9"/>
<dbReference type="OrthoDB" id="9804482at2"/>
<dbReference type="Proteomes" id="UP000001411">
    <property type="component" value="Chromosome"/>
</dbReference>
<dbReference type="GO" id="GO:0046872">
    <property type="term" value="F:metal ion binding"/>
    <property type="evidence" value="ECO:0007669"/>
    <property type="project" value="UniProtKB-KW"/>
</dbReference>
<dbReference type="GO" id="GO:0008237">
    <property type="term" value="F:metallopeptidase activity"/>
    <property type="evidence" value="ECO:0007669"/>
    <property type="project" value="UniProtKB-KW"/>
</dbReference>
<dbReference type="GO" id="GO:0006508">
    <property type="term" value="P:proteolysis"/>
    <property type="evidence" value="ECO:0007669"/>
    <property type="project" value="UniProtKB-KW"/>
</dbReference>
<dbReference type="CDD" id="cd08071">
    <property type="entry name" value="MPN_DUF2466"/>
    <property type="match status" value="1"/>
</dbReference>
<dbReference type="Gene3D" id="3.40.140.10">
    <property type="entry name" value="Cytidine Deaminase, domain 2"/>
    <property type="match status" value="1"/>
</dbReference>
<dbReference type="InterPro" id="IPR037518">
    <property type="entry name" value="MPN"/>
</dbReference>
<dbReference type="InterPro" id="IPR025657">
    <property type="entry name" value="RadC_JAB"/>
</dbReference>
<dbReference type="InterPro" id="IPR010994">
    <property type="entry name" value="RuvA_2-like"/>
</dbReference>
<dbReference type="InterPro" id="IPR001405">
    <property type="entry name" value="UPF0758"/>
</dbReference>
<dbReference type="InterPro" id="IPR020891">
    <property type="entry name" value="UPF0758_CS"/>
</dbReference>
<dbReference type="InterPro" id="IPR046778">
    <property type="entry name" value="UPF0758_N"/>
</dbReference>
<dbReference type="NCBIfam" id="NF000642">
    <property type="entry name" value="PRK00024.1"/>
    <property type="match status" value="1"/>
</dbReference>
<dbReference type="NCBIfam" id="TIGR00608">
    <property type="entry name" value="radc"/>
    <property type="match status" value="1"/>
</dbReference>
<dbReference type="PANTHER" id="PTHR30471">
    <property type="entry name" value="DNA REPAIR PROTEIN RADC"/>
    <property type="match status" value="1"/>
</dbReference>
<dbReference type="PANTHER" id="PTHR30471:SF3">
    <property type="entry name" value="UPF0758 PROTEIN YEES-RELATED"/>
    <property type="match status" value="1"/>
</dbReference>
<dbReference type="Pfam" id="PF04002">
    <property type="entry name" value="RadC"/>
    <property type="match status" value="1"/>
</dbReference>
<dbReference type="Pfam" id="PF20582">
    <property type="entry name" value="UPF0758_N"/>
    <property type="match status" value="1"/>
</dbReference>
<dbReference type="SUPFAM" id="SSF102712">
    <property type="entry name" value="JAB1/MPN domain"/>
    <property type="match status" value="1"/>
</dbReference>
<dbReference type="SUPFAM" id="SSF47781">
    <property type="entry name" value="RuvA domain 2-like"/>
    <property type="match status" value="1"/>
</dbReference>
<dbReference type="PROSITE" id="PS50249">
    <property type="entry name" value="MPN"/>
    <property type="match status" value="1"/>
</dbReference>
<dbReference type="PROSITE" id="PS01302">
    <property type="entry name" value="UPF0758"/>
    <property type="match status" value="1"/>
</dbReference>
<sequence>MRINEMALHEKPRERLITYGAKSLSNVELLAILLNTGRKGFSSIDIANELLKQQSTIRDLKKLSINDLLKIKGIGLYKAVILQAAFELGERINSTSTFDKVQITHPSDVASLMMSTMKDLEQEHFVVLLLNSKNIVTKQAWVYKGTLNSSIIHPREVFNIAIRESSNSIIVVHNHPSGDVTPSKEDITTTYRLKECGDILGINLLDHIIIGDNKFTSLVEAGYFDK</sequence>